<sequence length="324" mass="35661">EFHPGTFPPSFGSVAPFLADLDTTDGLGNVYYREDLSPFIIQMAAEYVQRGFPEVSFQPTSVVVVTWESMAPYGGPSGSLVEEGKRNTFQAVLASSNSSSYAIFLYPDDGLQFFTTFSKKDENQVPAVVGFSKGLEGFLWKSNGAYNIFANDRESIENLAKSSNAGHQGVWVFEIGSPATAKGVVPADVNLDVDDDGADYEDEDYDLQTSHLGLEDVATQPFPSHSPRRGYPDPHNVPRTLAPSYEATERPHGIPTERTKSFQLPVERFPQKHPQVIDVDEVEETGVVFSYNTGSQQTCANNRHQCSVHAECRDYATGFCCRCV</sequence>
<accession>P08460</accession>
<accession>Q712L9</accession>
<feature type="chain" id="PRO_0000055634" description="Nidogen-1">
    <location>
        <begin position="1" status="less than"/>
        <end position="324" status="greater than"/>
    </location>
</feature>
<feature type="domain" description="NIDO" evidence="4">
    <location>
        <begin position="16"/>
        <end position="178"/>
    </location>
</feature>
<feature type="domain" description="EGF-like" evidence="3">
    <location>
        <begin position="295"/>
        <end position="324" status="greater than"/>
    </location>
</feature>
<feature type="region of interest" description="Disordered" evidence="5">
    <location>
        <begin position="219"/>
        <end position="259"/>
    </location>
</feature>
<feature type="compositionally biased region" description="Basic and acidic residues" evidence="5">
    <location>
        <begin position="247"/>
        <end position="259"/>
    </location>
</feature>
<feature type="modified residue" description="Sulfotyrosine" evidence="2">
    <location>
        <position position="200"/>
    </location>
</feature>
<feature type="modified residue" description="Sulfotyrosine" evidence="2">
    <location>
        <position position="205"/>
    </location>
</feature>
<feature type="glycosylation site" description="N-linked (GlcNAc...) asparagine" evidence="2">
    <location>
        <position position="97"/>
    </location>
</feature>
<feature type="disulfide bond" evidence="3">
    <location>
        <begin position="299"/>
        <end position="312"/>
    </location>
</feature>
<feature type="disulfide bond" evidence="3">
    <location>
        <begin position="306"/>
        <end position="321"/>
    </location>
</feature>
<feature type="non-terminal residue">
    <location>
        <position position="1"/>
    </location>
</feature>
<feature type="non-terminal residue">
    <location>
        <position position="324"/>
    </location>
</feature>
<evidence type="ECO:0000250" key="1">
    <source>
        <dbReference type="UniProtKB" id="P10493"/>
    </source>
</evidence>
<evidence type="ECO:0000255" key="2"/>
<evidence type="ECO:0000255" key="3">
    <source>
        <dbReference type="PROSITE-ProRule" id="PRU00076"/>
    </source>
</evidence>
<evidence type="ECO:0000255" key="4">
    <source>
        <dbReference type="PROSITE-ProRule" id="PRU00570"/>
    </source>
</evidence>
<evidence type="ECO:0000256" key="5">
    <source>
        <dbReference type="SAM" id="MobiDB-lite"/>
    </source>
</evidence>
<reference key="1">
    <citation type="journal article" date="1988" name="J. Cell Biol.">
        <title>Amino acid sequence and domain structure of entactin. Homology with epidermal growth factor precursor and low density lipoprotein receptor.</title>
        <authorList>
            <person name="Durkin M.E."/>
            <person name="Chakravarti S."/>
            <person name="Bartos B.B."/>
            <person name="Liu S.H."/>
            <person name="Friedman R.L."/>
            <person name="Chung A.E."/>
        </authorList>
    </citation>
    <scope>NUCLEOTIDE SEQUENCE [MRNA]</scope>
</reference>
<reference key="2">
    <citation type="journal article" date="1987" name="Proc. Natl. Acad. Sci. U.S.A.">
        <title>Carboxyl-terminal sequence of entactin deduced from a cDNA clone.</title>
        <authorList>
            <person name="Durkin M.E."/>
            <person name="Carlin B.E."/>
            <person name="Vergnes J."/>
            <person name="Bartos B.B."/>
            <person name="Merlie J."/>
            <person name="Chung A.E."/>
        </authorList>
    </citation>
    <scope>PRELIMINARY NUCLEOTIDE SEQUENCE [MRNA]</scope>
</reference>
<reference key="3">
    <citation type="journal article" date="2000" name="Eur. J. Cell Biol.">
        <title>Mesenchymal entactin-1 (nidogen-1) is required for adhesion of peritubular cells of the rat testis in vitro.</title>
        <authorList>
            <person name="Konrad L."/>
            <person name="Albrecht M."/>
            <person name="Renneberg H."/>
            <person name="Ulrix W."/>
            <person name="Hoeben E."/>
            <person name="Verhoeven G."/>
            <person name="Aumuller G."/>
        </authorList>
    </citation>
    <scope>NUCLEOTIDE SEQUENCE [MRNA] OF 211-319</scope>
    <source>
        <strain>Wistar</strain>
    </source>
</reference>
<proteinExistence type="evidence at protein level"/>
<organism>
    <name type="scientific">Rattus norvegicus</name>
    <name type="common">Rat</name>
    <dbReference type="NCBI Taxonomy" id="10116"/>
    <lineage>
        <taxon>Eukaryota</taxon>
        <taxon>Metazoa</taxon>
        <taxon>Chordata</taxon>
        <taxon>Craniata</taxon>
        <taxon>Vertebrata</taxon>
        <taxon>Euteleostomi</taxon>
        <taxon>Mammalia</taxon>
        <taxon>Eutheria</taxon>
        <taxon>Euarchontoglires</taxon>
        <taxon>Glires</taxon>
        <taxon>Rodentia</taxon>
        <taxon>Myomorpha</taxon>
        <taxon>Muroidea</taxon>
        <taxon>Muridae</taxon>
        <taxon>Murinae</taxon>
        <taxon>Rattus</taxon>
    </lineage>
</organism>
<gene>
    <name type="primary">Nid1</name>
    <name type="synonym">Nid</name>
</gene>
<comment type="function">
    <text>Sulfated glycoprotein widely distributed in basement membranes and tightly associated with laminin. Also binds to collagen IV and perlecan. It probably has a role in cell-extracellular matrix interactions.</text>
</comment>
<comment type="subunit">
    <text evidence="1">Interacts with FBLN1 (By similarity). Interacts with LGALS3BP (By similarity). Interacts with PLXDC1 (By similarity). Interacts with SVEP1 (By similarity).</text>
</comment>
<comment type="interaction">
    <interactant intactId="EBI-8280787">
        <id>P08460</id>
    </interactant>
    <interactant intactId="EBI-8280807">
        <id>Q91ZV7</id>
        <label>Plxdc1</label>
    </interactant>
    <organismsDiffer>true</organismsDiffer>
    <experiments>2</experiments>
</comment>
<comment type="subcellular location">
    <subcellularLocation>
        <location>Secreted</location>
        <location>Extracellular space</location>
        <location>Extracellular matrix</location>
        <location>Basement membrane</location>
    </subcellularLocation>
</comment>
<comment type="PTM">
    <text>N- and O-glycosylated.</text>
</comment>
<name>NID1_RAT</name>
<keyword id="KW-0084">Basement membrane</keyword>
<keyword id="KW-0130">Cell adhesion</keyword>
<keyword id="KW-1015">Disulfide bond</keyword>
<keyword id="KW-0245">EGF-like domain</keyword>
<keyword id="KW-0272">Extracellular matrix</keyword>
<keyword id="KW-0325">Glycoprotein</keyword>
<keyword id="KW-1185">Reference proteome</keyword>
<keyword id="KW-0964">Secreted</keyword>
<keyword id="KW-0765">Sulfation</keyword>
<protein>
    <recommendedName>
        <fullName>Nidogen-1</fullName>
        <shortName>NID-1</shortName>
    </recommendedName>
    <alternativeName>
        <fullName>Entactin</fullName>
    </alternativeName>
</protein>
<dbReference type="EMBL" id="M15797">
    <property type="protein sequence ID" value="AAA41120.1"/>
    <property type="status" value="ALT_SEQ"/>
    <property type="molecule type" value="mRNA"/>
</dbReference>
<dbReference type="EMBL" id="AJ224450">
    <property type="protein sequence ID" value="CAA11963.1"/>
    <property type="molecule type" value="mRNA"/>
</dbReference>
<dbReference type="PIR" id="S14828">
    <property type="entry name" value="S14828"/>
</dbReference>
<dbReference type="SMR" id="P08460"/>
<dbReference type="IntAct" id="P08460">
    <property type="interactions" value="2"/>
</dbReference>
<dbReference type="MINT" id="P08460"/>
<dbReference type="STRING" id="10116.ENSRNOP00000003349"/>
<dbReference type="GlyCosmos" id="P08460">
    <property type="glycosylation" value="1 site, No reported glycans"/>
</dbReference>
<dbReference type="GlyGen" id="P08460">
    <property type="glycosylation" value="1 site"/>
</dbReference>
<dbReference type="PhosphoSitePlus" id="P08460"/>
<dbReference type="PaxDb" id="10116-ENSRNOP00000003349"/>
<dbReference type="PeptideAtlas" id="P08460"/>
<dbReference type="UCSC" id="RGD:3178">
    <property type="organism name" value="rat"/>
</dbReference>
<dbReference type="AGR" id="RGD:3178"/>
<dbReference type="RGD" id="3178">
    <property type="gene designation" value="Nid1"/>
</dbReference>
<dbReference type="eggNOG" id="KOG1214">
    <property type="taxonomic scope" value="Eukaryota"/>
</dbReference>
<dbReference type="InParanoid" id="P08460"/>
<dbReference type="PhylomeDB" id="P08460"/>
<dbReference type="Proteomes" id="UP000002494">
    <property type="component" value="Unplaced"/>
</dbReference>
<dbReference type="GO" id="GO:0005604">
    <property type="term" value="C:basement membrane"/>
    <property type="evidence" value="ECO:0000266"/>
    <property type="project" value="RGD"/>
</dbReference>
<dbReference type="GO" id="GO:0071944">
    <property type="term" value="C:cell periphery"/>
    <property type="evidence" value="ECO:0000266"/>
    <property type="project" value="RGD"/>
</dbReference>
<dbReference type="GO" id="GO:0031012">
    <property type="term" value="C:extracellular matrix"/>
    <property type="evidence" value="ECO:0000266"/>
    <property type="project" value="RGD"/>
</dbReference>
<dbReference type="GO" id="GO:0005576">
    <property type="term" value="C:extracellular region"/>
    <property type="evidence" value="ECO:0007669"/>
    <property type="project" value="UniProtKB-KW"/>
</dbReference>
<dbReference type="GO" id="GO:0005518">
    <property type="term" value="F:collagen binding"/>
    <property type="evidence" value="ECO:0000266"/>
    <property type="project" value="RGD"/>
</dbReference>
<dbReference type="GO" id="GO:0050840">
    <property type="term" value="F:extracellular matrix binding"/>
    <property type="evidence" value="ECO:0000266"/>
    <property type="project" value="RGD"/>
</dbReference>
<dbReference type="GO" id="GO:0043236">
    <property type="term" value="F:laminin binding"/>
    <property type="evidence" value="ECO:0000266"/>
    <property type="project" value="RGD"/>
</dbReference>
<dbReference type="GO" id="GO:0043237">
    <property type="term" value="F:laminin-1 binding"/>
    <property type="evidence" value="ECO:0000266"/>
    <property type="project" value="RGD"/>
</dbReference>
<dbReference type="GO" id="GO:0043394">
    <property type="term" value="F:proteoglycan binding"/>
    <property type="evidence" value="ECO:0000266"/>
    <property type="project" value="RGD"/>
</dbReference>
<dbReference type="GO" id="GO:0007160">
    <property type="term" value="P:cell-matrix adhesion"/>
    <property type="evidence" value="ECO:0000266"/>
    <property type="project" value="RGD"/>
</dbReference>
<dbReference type="GO" id="GO:0030198">
    <property type="term" value="P:extracellular matrix organization"/>
    <property type="evidence" value="ECO:0000266"/>
    <property type="project" value="RGD"/>
</dbReference>
<dbReference type="GO" id="GO:0032836">
    <property type="term" value="P:glomerular basement membrane development"/>
    <property type="evidence" value="ECO:0000266"/>
    <property type="project" value="RGD"/>
</dbReference>
<dbReference type="GO" id="GO:0010811">
    <property type="term" value="P:positive regulation of cell-substrate adhesion"/>
    <property type="evidence" value="ECO:0000266"/>
    <property type="project" value="RGD"/>
</dbReference>
<dbReference type="InterPro" id="IPR051495">
    <property type="entry name" value="Epithelial_Barrier/Signaling"/>
</dbReference>
<dbReference type="InterPro" id="IPR003886">
    <property type="entry name" value="NIDO_dom"/>
</dbReference>
<dbReference type="PANTHER" id="PTHR13802">
    <property type="entry name" value="MUCIN 4-RELATED"/>
    <property type="match status" value="1"/>
</dbReference>
<dbReference type="PANTHER" id="PTHR13802:SF52">
    <property type="entry name" value="MUCIN-4"/>
    <property type="match status" value="1"/>
</dbReference>
<dbReference type="Pfam" id="PF06119">
    <property type="entry name" value="NIDO"/>
    <property type="match status" value="1"/>
</dbReference>
<dbReference type="SMART" id="SM00539">
    <property type="entry name" value="NIDO"/>
    <property type="match status" value="1"/>
</dbReference>
<dbReference type="PROSITE" id="PS00010">
    <property type="entry name" value="ASX_HYDROXYL"/>
    <property type="match status" value="1"/>
</dbReference>
<dbReference type="PROSITE" id="PS51220">
    <property type="entry name" value="NIDO"/>
    <property type="match status" value="1"/>
</dbReference>